<dbReference type="EC" id="3.1.-.-" evidence="1"/>
<dbReference type="EMBL" id="FM211192">
    <property type="protein sequence ID" value="CAR70606.1"/>
    <property type="molecule type" value="Genomic_DNA"/>
</dbReference>
<dbReference type="SMR" id="B8ZUJ7"/>
<dbReference type="KEGG" id="mlb:MLBr00513"/>
<dbReference type="HOGENOM" id="CLU_098240_0_1_11"/>
<dbReference type="Proteomes" id="UP000006900">
    <property type="component" value="Chromosome"/>
</dbReference>
<dbReference type="GO" id="GO:0005829">
    <property type="term" value="C:cytosol"/>
    <property type="evidence" value="ECO:0007669"/>
    <property type="project" value="TreeGrafter"/>
</dbReference>
<dbReference type="GO" id="GO:0004518">
    <property type="term" value="F:nuclease activity"/>
    <property type="evidence" value="ECO:0007669"/>
    <property type="project" value="UniProtKB-KW"/>
</dbReference>
<dbReference type="GO" id="GO:0000967">
    <property type="term" value="P:rRNA 5'-end processing"/>
    <property type="evidence" value="ECO:0007669"/>
    <property type="project" value="UniProtKB-UniRule"/>
</dbReference>
<dbReference type="CDD" id="cd16964">
    <property type="entry name" value="YqgF"/>
    <property type="match status" value="1"/>
</dbReference>
<dbReference type="FunFam" id="3.30.420.140:FF:000005">
    <property type="entry name" value="Putative pre-16S rRNA nuclease"/>
    <property type="match status" value="1"/>
</dbReference>
<dbReference type="Gene3D" id="3.30.420.140">
    <property type="entry name" value="YqgF/RNase H-like domain"/>
    <property type="match status" value="1"/>
</dbReference>
<dbReference type="HAMAP" id="MF_00651">
    <property type="entry name" value="Nuclease_YqgF"/>
    <property type="match status" value="1"/>
</dbReference>
<dbReference type="InterPro" id="IPR012337">
    <property type="entry name" value="RNaseH-like_sf"/>
</dbReference>
<dbReference type="InterPro" id="IPR005227">
    <property type="entry name" value="YqgF"/>
</dbReference>
<dbReference type="InterPro" id="IPR006641">
    <property type="entry name" value="YqgF/RNaseH-like_dom"/>
</dbReference>
<dbReference type="InterPro" id="IPR037027">
    <property type="entry name" value="YqgF/RNaseH-like_dom_sf"/>
</dbReference>
<dbReference type="NCBIfam" id="TIGR00250">
    <property type="entry name" value="RNAse_H_YqgF"/>
    <property type="match status" value="1"/>
</dbReference>
<dbReference type="PANTHER" id="PTHR33317">
    <property type="entry name" value="POLYNUCLEOTIDYL TRANSFERASE, RIBONUCLEASE H-LIKE SUPERFAMILY PROTEIN"/>
    <property type="match status" value="1"/>
</dbReference>
<dbReference type="PANTHER" id="PTHR33317:SF4">
    <property type="entry name" value="POLYNUCLEOTIDYL TRANSFERASE, RIBONUCLEASE H-LIKE SUPERFAMILY PROTEIN"/>
    <property type="match status" value="1"/>
</dbReference>
<dbReference type="Pfam" id="PF03652">
    <property type="entry name" value="RuvX"/>
    <property type="match status" value="1"/>
</dbReference>
<dbReference type="SMART" id="SM00732">
    <property type="entry name" value="YqgFc"/>
    <property type="match status" value="1"/>
</dbReference>
<dbReference type="SUPFAM" id="SSF53098">
    <property type="entry name" value="Ribonuclease H-like"/>
    <property type="match status" value="1"/>
</dbReference>
<proteinExistence type="inferred from homology"/>
<name>YQGF_MYCLB</name>
<reference key="1">
    <citation type="journal article" date="2009" name="Nat. Genet.">
        <title>Comparative genomic and phylogeographic analysis of Mycobacterium leprae.</title>
        <authorList>
            <person name="Monot M."/>
            <person name="Honore N."/>
            <person name="Garnier T."/>
            <person name="Zidane N."/>
            <person name="Sherafi D."/>
            <person name="Paniz-Mondolfi A."/>
            <person name="Matsuoka M."/>
            <person name="Taylor G.M."/>
            <person name="Donoghue H.D."/>
            <person name="Bouwman A."/>
            <person name="Mays S."/>
            <person name="Watson C."/>
            <person name="Lockwood D."/>
            <person name="Khamispour A."/>
            <person name="Dowlati Y."/>
            <person name="Jianping S."/>
            <person name="Rea T.H."/>
            <person name="Vera-Cabrera L."/>
            <person name="Stefani M.M."/>
            <person name="Banu S."/>
            <person name="Macdonald M."/>
            <person name="Sapkota B.R."/>
            <person name="Spencer J.S."/>
            <person name="Thomas J."/>
            <person name="Harshman K."/>
            <person name="Singh P."/>
            <person name="Busso P."/>
            <person name="Gattiker A."/>
            <person name="Rougemont J."/>
            <person name="Brennan P.J."/>
            <person name="Cole S.T."/>
        </authorList>
    </citation>
    <scope>NUCLEOTIDE SEQUENCE [LARGE SCALE GENOMIC DNA]</scope>
    <source>
        <strain>Br4923</strain>
    </source>
</reference>
<feature type="chain" id="PRO_1000147486" description="Putative pre-16S rRNA nuclease">
    <location>
        <begin position="1"/>
        <end position="184"/>
    </location>
</feature>
<feature type="region of interest" description="Disordered" evidence="2">
    <location>
        <begin position="1"/>
        <end position="23"/>
    </location>
</feature>
<comment type="function">
    <text evidence="1">Could be a nuclease involved in processing of the 5'-end of pre-16S rRNA.</text>
</comment>
<comment type="subcellular location">
    <subcellularLocation>
        <location evidence="1">Cytoplasm</location>
    </subcellularLocation>
</comment>
<comment type="similarity">
    <text evidence="1">Belongs to the YqgF nuclease family.</text>
</comment>
<keyword id="KW-0963">Cytoplasm</keyword>
<keyword id="KW-0378">Hydrolase</keyword>
<keyword id="KW-0540">Nuclease</keyword>
<keyword id="KW-0690">Ribosome biogenesis</keyword>
<gene>
    <name type="ordered locus">MLBr00513</name>
</gene>
<evidence type="ECO:0000255" key="1">
    <source>
        <dbReference type="HAMAP-Rule" id="MF_00651"/>
    </source>
</evidence>
<evidence type="ECO:0000256" key="2">
    <source>
        <dbReference type="SAM" id="MobiDB-lite"/>
    </source>
</evidence>
<sequence length="184" mass="19922">MFSSQHRLLYQPSGPDLSKNLDPERGRRLGIDVGSVRIGVAFSDPDGILATPVETVRRYRSAKHLRRLAELVVELQVVEVVVGLPWTLTDRTGSSAKDAIDTAEALARRVAPVPVRLVDERLTTVSAQRLLRAAGVRAKDQRAVIDQAAAVVILQNWLDQCRAATPARADEPTTGSVAGEVIDG</sequence>
<accession>B8ZUJ7</accession>
<protein>
    <recommendedName>
        <fullName evidence="1">Putative pre-16S rRNA nuclease</fullName>
        <ecNumber evidence="1">3.1.-.-</ecNumber>
    </recommendedName>
</protein>
<organism>
    <name type="scientific">Mycobacterium leprae (strain Br4923)</name>
    <dbReference type="NCBI Taxonomy" id="561304"/>
    <lineage>
        <taxon>Bacteria</taxon>
        <taxon>Bacillati</taxon>
        <taxon>Actinomycetota</taxon>
        <taxon>Actinomycetes</taxon>
        <taxon>Mycobacteriales</taxon>
        <taxon>Mycobacteriaceae</taxon>
        <taxon>Mycobacterium</taxon>
    </lineage>
</organism>